<gene>
    <name evidence="1" type="primary">ilvC</name>
    <name type="ordered locus">SPP_0477</name>
</gene>
<accession>C1CIU7</accession>
<dbReference type="EC" id="1.1.1.86" evidence="1"/>
<dbReference type="EMBL" id="CP000920">
    <property type="protein sequence ID" value="ACO20408.1"/>
    <property type="molecule type" value="Genomic_DNA"/>
</dbReference>
<dbReference type="RefSeq" id="WP_000218054.1">
    <property type="nucleotide sequence ID" value="NC_012467.1"/>
</dbReference>
<dbReference type="SMR" id="C1CIU7"/>
<dbReference type="GeneID" id="45652102"/>
<dbReference type="KEGG" id="spp:SPP_0477"/>
<dbReference type="HOGENOM" id="CLU_033821_0_1_9"/>
<dbReference type="UniPathway" id="UPA00047">
    <property type="reaction ID" value="UER00056"/>
</dbReference>
<dbReference type="UniPathway" id="UPA00049">
    <property type="reaction ID" value="UER00060"/>
</dbReference>
<dbReference type="GO" id="GO:0005829">
    <property type="term" value="C:cytosol"/>
    <property type="evidence" value="ECO:0007669"/>
    <property type="project" value="TreeGrafter"/>
</dbReference>
<dbReference type="GO" id="GO:0004455">
    <property type="term" value="F:ketol-acid reductoisomerase activity"/>
    <property type="evidence" value="ECO:0007669"/>
    <property type="project" value="UniProtKB-UniRule"/>
</dbReference>
<dbReference type="GO" id="GO:0000287">
    <property type="term" value="F:magnesium ion binding"/>
    <property type="evidence" value="ECO:0007669"/>
    <property type="project" value="UniProtKB-UniRule"/>
</dbReference>
<dbReference type="GO" id="GO:0050661">
    <property type="term" value="F:NADP binding"/>
    <property type="evidence" value="ECO:0007669"/>
    <property type="project" value="InterPro"/>
</dbReference>
<dbReference type="GO" id="GO:0009097">
    <property type="term" value="P:isoleucine biosynthetic process"/>
    <property type="evidence" value="ECO:0007669"/>
    <property type="project" value="UniProtKB-UniRule"/>
</dbReference>
<dbReference type="GO" id="GO:0009099">
    <property type="term" value="P:L-valine biosynthetic process"/>
    <property type="evidence" value="ECO:0007669"/>
    <property type="project" value="UniProtKB-UniRule"/>
</dbReference>
<dbReference type="FunFam" id="3.40.50.720:FF:000023">
    <property type="entry name" value="Ketol-acid reductoisomerase (NADP(+))"/>
    <property type="match status" value="1"/>
</dbReference>
<dbReference type="Gene3D" id="6.10.240.10">
    <property type="match status" value="1"/>
</dbReference>
<dbReference type="Gene3D" id="3.40.50.720">
    <property type="entry name" value="NAD(P)-binding Rossmann-like Domain"/>
    <property type="match status" value="1"/>
</dbReference>
<dbReference type="HAMAP" id="MF_00435">
    <property type="entry name" value="IlvC"/>
    <property type="match status" value="1"/>
</dbReference>
<dbReference type="InterPro" id="IPR008927">
    <property type="entry name" value="6-PGluconate_DH-like_C_sf"/>
</dbReference>
<dbReference type="InterPro" id="IPR013023">
    <property type="entry name" value="KARI"/>
</dbReference>
<dbReference type="InterPro" id="IPR000506">
    <property type="entry name" value="KARI_C"/>
</dbReference>
<dbReference type="InterPro" id="IPR013116">
    <property type="entry name" value="KARI_N"/>
</dbReference>
<dbReference type="InterPro" id="IPR014359">
    <property type="entry name" value="KARI_prok"/>
</dbReference>
<dbReference type="InterPro" id="IPR036291">
    <property type="entry name" value="NAD(P)-bd_dom_sf"/>
</dbReference>
<dbReference type="NCBIfam" id="TIGR00465">
    <property type="entry name" value="ilvC"/>
    <property type="match status" value="1"/>
</dbReference>
<dbReference type="NCBIfam" id="NF004017">
    <property type="entry name" value="PRK05479.1"/>
    <property type="match status" value="1"/>
</dbReference>
<dbReference type="NCBIfam" id="NF009940">
    <property type="entry name" value="PRK13403.1"/>
    <property type="match status" value="1"/>
</dbReference>
<dbReference type="PANTHER" id="PTHR21371">
    <property type="entry name" value="KETOL-ACID REDUCTOISOMERASE, MITOCHONDRIAL"/>
    <property type="match status" value="1"/>
</dbReference>
<dbReference type="PANTHER" id="PTHR21371:SF1">
    <property type="entry name" value="KETOL-ACID REDUCTOISOMERASE, MITOCHONDRIAL"/>
    <property type="match status" value="1"/>
</dbReference>
<dbReference type="Pfam" id="PF01450">
    <property type="entry name" value="KARI_C"/>
    <property type="match status" value="1"/>
</dbReference>
<dbReference type="Pfam" id="PF07991">
    <property type="entry name" value="KARI_N"/>
    <property type="match status" value="1"/>
</dbReference>
<dbReference type="PIRSF" id="PIRSF000116">
    <property type="entry name" value="IlvC_gammaproteo"/>
    <property type="match status" value="1"/>
</dbReference>
<dbReference type="SUPFAM" id="SSF48179">
    <property type="entry name" value="6-phosphogluconate dehydrogenase C-terminal domain-like"/>
    <property type="match status" value="1"/>
</dbReference>
<dbReference type="SUPFAM" id="SSF51735">
    <property type="entry name" value="NAD(P)-binding Rossmann-fold domains"/>
    <property type="match status" value="1"/>
</dbReference>
<dbReference type="PROSITE" id="PS51851">
    <property type="entry name" value="KARI_C"/>
    <property type="match status" value="1"/>
</dbReference>
<dbReference type="PROSITE" id="PS51850">
    <property type="entry name" value="KARI_N"/>
    <property type="match status" value="1"/>
</dbReference>
<evidence type="ECO:0000255" key="1">
    <source>
        <dbReference type="HAMAP-Rule" id="MF_00435"/>
    </source>
</evidence>
<evidence type="ECO:0000255" key="2">
    <source>
        <dbReference type="PROSITE-ProRule" id="PRU01197"/>
    </source>
</evidence>
<evidence type="ECO:0000255" key="3">
    <source>
        <dbReference type="PROSITE-ProRule" id="PRU01198"/>
    </source>
</evidence>
<proteinExistence type="inferred from homology"/>
<keyword id="KW-0028">Amino-acid biosynthesis</keyword>
<keyword id="KW-0100">Branched-chain amino acid biosynthesis</keyword>
<keyword id="KW-0460">Magnesium</keyword>
<keyword id="KW-0479">Metal-binding</keyword>
<keyword id="KW-0521">NADP</keyword>
<keyword id="KW-0560">Oxidoreductase</keyword>
<feature type="chain" id="PRO_1000191001" description="Ketol-acid reductoisomerase (NADP(+))">
    <location>
        <begin position="1"/>
        <end position="340"/>
    </location>
</feature>
<feature type="domain" description="KARI N-terminal Rossmann" evidence="2">
    <location>
        <begin position="3"/>
        <end position="182"/>
    </location>
</feature>
<feature type="domain" description="KARI C-terminal knotted" evidence="3">
    <location>
        <begin position="183"/>
        <end position="328"/>
    </location>
</feature>
<feature type="active site" evidence="1">
    <location>
        <position position="108"/>
    </location>
</feature>
<feature type="binding site" evidence="1">
    <location>
        <begin position="26"/>
        <end position="29"/>
    </location>
    <ligand>
        <name>NADP(+)</name>
        <dbReference type="ChEBI" id="CHEBI:58349"/>
    </ligand>
</feature>
<feature type="binding site" evidence="1">
    <location>
        <position position="49"/>
    </location>
    <ligand>
        <name>NADP(+)</name>
        <dbReference type="ChEBI" id="CHEBI:58349"/>
    </ligand>
</feature>
<feature type="binding site" evidence="1">
    <location>
        <position position="53"/>
    </location>
    <ligand>
        <name>NADP(+)</name>
        <dbReference type="ChEBI" id="CHEBI:58349"/>
    </ligand>
</feature>
<feature type="binding site" evidence="1">
    <location>
        <begin position="83"/>
        <end position="86"/>
    </location>
    <ligand>
        <name>NADP(+)</name>
        <dbReference type="ChEBI" id="CHEBI:58349"/>
    </ligand>
</feature>
<feature type="binding site" evidence="1">
    <location>
        <position position="134"/>
    </location>
    <ligand>
        <name>NADP(+)</name>
        <dbReference type="ChEBI" id="CHEBI:58349"/>
    </ligand>
</feature>
<feature type="binding site" evidence="1">
    <location>
        <position position="191"/>
    </location>
    <ligand>
        <name>Mg(2+)</name>
        <dbReference type="ChEBI" id="CHEBI:18420"/>
        <label>1</label>
    </ligand>
</feature>
<feature type="binding site" evidence="1">
    <location>
        <position position="191"/>
    </location>
    <ligand>
        <name>Mg(2+)</name>
        <dbReference type="ChEBI" id="CHEBI:18420"/>
        <label>2</label>
    </ligand>
</feature>
<feature type="binding site" evidence="1">
    <location>
        <position position="195"/>
    </location>
    <ligand>
        <name>Mg(2+)</name>
        <dbReference type="ChEBI" id="CHEBI:18420"/>
        <label>1</label>
    </ligand>
</feature>
<feature type="binding site" evidence="1">
    <location>
        <position position="227"/>
    </location>
    <ligand>
        <name>Mg(2+)</name>
        <dbReference type="ChEBI" id="CHEBI:18420"/>
        <label>2</label>
    </ligand>
</feature>
<feature type="binding site" evidence="1">
    <location>
        <position position="231"/>
    </location>
    <ligand>
        <name>Mg(2+)</name>
        <dbReference type="ChEBI" id="CHEBI:18420"/>
        <label>2</label>
    </ligand>
</feature>
<feature type="binding site" evidence="1">
    <location>
        <position position="252"/>
    </location>
    <ligand>
        <name>substrate</name>
    </ligand>
</feature>
<sequence>MTVQMEYEKDVKVAALDGKKIAVIGYGSQGHAHAQNLRDSGRDVIIGVRPGKSFDKAKEDGFDTYTVAEATKLADVIMILAPDEIQQELYEAEIAPNLEAGNAVGFAHGFNIHFEFIKVPADVDVFMCAPKGPGHLVRRTYEEGFGVPALYAVYQDATGNAKNIAMDWCKGVGAARVGLLETTYKEETEEDLFGEQAVLCGGLTALIEAGFEVLTEAGYAPELAYFEVLHEMKLIVDLIYEGGFKKMRQSISNTAEYGDYVSGPRVITEQVKENMKAVLADIQNGKFANDFVNDYKAGRPKLTAYREQAANLEIEKVGAELRKAMPFVGKNDDDAFKIYN</sequence>
<organism>
    <name type="scientific">Streptococcus pneumoniae (strain P1031)</name>
    <dbReference type="NCBI Taxonomy" id="488223"/>
    <lineage>
        <taxon>Bacteria</taxon>
        <taxon>Bacillati</taxon>
        <taxon>Bacillota</taxon>
        <taxon>Bacilli</taxon>
        <taxon>Lactobacillales</taxon>
        <taxon>Streptococcaceae</taxon>
        <taxon>Streptococcus</taxon>
    </lineage>
</organism>
<reference key="1">
    <citation type="journal article" date="2010" name="Genome Biol.">
        <title>Structure and dynamics of the pan-genome of Streptococcus pneumoniae and closely related species.</title>
        <authorList>
            <person name="Donati C."/>
            <person name="Hiller N.L."/>
            <person name="Tettelin H."/>
            <person name="Muzzi A."/>
            <person name="Croucher N.J."/>
            <person name="Angiuoli S.V."/>
            <person name="Oggioni M."/>
            <person name="Dunning Hotopp J.C."/>
            <person name="Hu F.Z."/>
            <person name="Riley D.R."/>
            <person name="Covacci A."/>
            <person name="Mitchell T.J."/>
            <person name="Bentley S.D."/>
            <person name="Kilian M."/>
            <person name="Ehrlich G.D."/>
            <person name="Rappuoli R."/>
            <person name="Moxon E.R."/>
            <person name="Masignani V."/>
        </authorList>
    </citation>
    <scope>NUCLEOTIDE SEQUENCE [LARGE SCALE GENOMIC DNA]</scope>
    <source>
        <strain>P1031</strain>
    </source>
</reference>
<comment type="function">
    <text evidence="1">Involved in the biosynthesis of branched-chain amino acids (BCAA). Catalyzes an alkyl-migration followed by a ketol-acid reduction of (S)-2-acetolactate (S2AL) to yield (R)-2,3-dihydroxy-isovalerate. In the isomerase reaction, S2AL is rearranged via a Mg-dependent methyl migration to produce 3-hydroxy-3-methyl-2-ketobutyrate (HMKB). In the reductase reaction, this 2-ketoacid undergoes a metal-dependent reduction by NADPH to yield (R)-2,3-dihydroxy-isovalerate.</text>
</comment>
<comment type="catalytic activity">
    <reaction evidence="1">
        <text>(2R)-2,3-dihydroxy-3-methylbutanoate + NADP(+) = (2S)-2-acetolactate + NADPH + H(+)</text>
        <dbReference type="Rhea" id="RHEA:22068"/>
        <dbReference type="ChEBI" id="CHEBI:15378"/>
        <dbReference type="ChEBI" id="CHEBI:49072"/>
        <dbReference type="ChEBI" id="CHEBI:57783"/>
        <dbReference type="ChEBI" id="CHEBI:58349"/>
        <dbReference type="ChEBI" id="CHEBI:58476"/>
        <dbReference type="EC" id="1.1.1.86"/>
    </reaction>
</comment>
<comment type="catalytic activity">
    <reaction evidence="1">
        <text>(2R,3R)-2,3-dihydroxy-3-methylpentanoate + NADP(+) = (S)-2-ethyl-2-hydroxy-3-oxobutanoate + NADPH + H(+)</text>
        <dbReference type="Rhea" id="RHEA:13493"/>
        <dbReference type="ChEBI" id="CHEBI:15378"/>
        <dbReference type="ChEBI" id="CHEBI:49256"/>
        <dbReference type="ChEBI" id="CHEBI:49258"/>
        <dbReference type="ChEBI" id="CHEBI:57783"/>
        <dbReference type="ChEBI" id="CHEBI:58349"/>
        <dbReference type="EC" id="1.1.1.86"/>
    </reaction>
</comment>
<comment type="cofactor">
    <cofactor evidence="1">
        <name>Mg(2+)</name>
        <dbReference type="ChEBI" id="CHEBI:18420"/>
    </cofactor>
    <text evidence="1">Binds 2 magnesium ions per subunit.</text>
</comment>
<comment type="pathway">
    <text evidence="1">Amino-acid biosynthesis; L-isoleucine biosynthesis; L-isoleucine from 2-oxobutanoate: step 2/4.</text>
</comment>
<comment type="pathway">
    <text evidence="1">Amino-acid biosynthesis; L-valine biosynthesis; L-valine from pyruvate: step 2/4.</text>
</comment>
<comment type="similarity">
    <text evidence="1">Belongs to the ketol-acid reductoisomerase family.</text>
</comment>
<protein>
    <recommendedName>
        <fullName evidence="1">Ketol-acid reductoisomerase (NADP(+))</fullName>
        <shortName evidence="1">KARI</shortName>
        <ecNumber evidence="1">1.1.1.86</ecNumber>
    </recommendedName>
    <alternativeName>
        <fullName evidence="1">Acetohydroxy-acid isomeroreductase</fullName>
        <shortName evidence="1">AHIR</shortName>
    </alternativeName>
    <alternativeName>
        <fullName evidence="1">Alpha-keto-beta-hydroxylacyl reductoisomerase</fullName>
    </alternativeName>
    <alternativeName>
        <fullName evidence="1">Ketol-acid reductoisomerase type 1</fullName>
    </alternativeName>
    <alternativeName>
        <fullName evidence="1">Ketol-acid reductoisomerase type I</fullName>
    </alternativeName>
</protein>
<name>ILVC_STRZP</name>